<feature type="chain" id="PRO_0000124299" description="Small ribosomal subunit protein uS7">
    <location>
        <begin position="1"/>
        <end position="156"/>
    </location>
</feature>
<protein>
    <recommendedName>
        <fullName evidence="1">Small ribosomal subunit protein uS7</fullName>
    </recommendedName>
    <alternativeName>
        <fullName evidence="2">30S ribosomal protein S7</fullName>
    </alternativeName>
</protein>
<gene>
    <name evidence="1" type="primary">rpsG</name>
    <name type="ordered locus">MMOB3680</name>
</gene>
<reference key="1">
    <citation type="journal article" date="2004" name="Genome Res.">
        <title>The complete genome and proteome of Mycoplasma mobile.</title>
        <authorList>
            <person name="Jaffe J.D."/>
            <person name="Stange-Thomann N."/>
            <person name="Smith C."/>
            <person name="DeCaprio D."/>
            <person name="Fisher S."/>
            <person name="Butler J."/>
            <person name="Calvo S."/>
            <person name="Elkins T."/>
            <person name="FitzGerald M.G."/>
            <person name="Hafez N."/>
            <person name="Kodira C.D."/>
            <person name="Major J."/>
            <person name="Wang S."/>
            <person name="Wilkinson J."/>
            <person name="Nicol R."/>
            <person name="Nusbaum C."/>
            <person name="Birren B."/>
            <person name="Berg H.C."/>
            <person name="Church G.M."/>
        </authorList>
    </citation>
    <scope>NUCLEOTIDE SEQUENCE [LARGE SCALE GENOMIC DNA]</scope>
    <source>
        <strain>ATCC 43663 / NCTC 11711 / 163 K</strain>
    </source>
</reference>
<sequence>MSRRKKAPIRQVLSDPIFNSKTITKLINTIMLDGKKSIAERILYQAFEIIKTKTNKDPMEVFQLALDNITPQLEVKTRRVGGTNYQVPMEVTKRRKETLSLRWLIHYSRLRSEKTMQECLANEIIDASNKTGSSIKKREDTHKMAEANKAFAHFRW</sequence>
<accession>Q6KHS4</accession>
<dbReference type="EMBL" id="AE017308">
    <property type="protein sequence ID" value="AAT27854.1"/>
    <property type="molecule type" value="Genomic_DNA"/>
</dbReference>
<dbReference type="RefSeq" id="WP_011264888.1">
    <property type="nucleotide sequence ID" value="NC_006908.1"/>
</dbReference>
<dbReference type="SMR" id="Q6KHS4"/>
<dbReference type="STRING" id="267748.MMOB3680"/>
<dbReference type="KEGG" id="mmo:MMOB3680"/>
<dbReference type="eggNOG" id="COG0049">
    <property type="taxonomic scope" value="Bacteria"/>
</dbReference>
<dbReference type="HOGENOM" id="CLU_072226_1_1_14"/>
<dbReference type="OrthoDB" id="9807653at2"/>
<dbReference type="Proteomes" id="UP000009072">
    <property type="component" value="Chromosome"/>
</dbReference>
<dbReference type="GO" id="GO:0015935">
    <property type="term" value="C:small ribosomal subunit"/>
    <property type="evidence" value="ECO:0007669"/>
    <property type="project" value="InterPro"/>
</dbReference>
<dbReference type="GO" id="GO:0019843">
    <property type="term" value="F:rRNA binding"/>
    <property type="evidence" value="ECO:0007669"/>
    <property type="project" value="UniProtKB-UniRule"/>
</dbReference>
<dbReference type="GO" id="GO:0003735">
    <property type="term" value="F:structural constituent of ribosome"/>
    <property type="evidence" value="ECO:0007669"/>
    <property type="project" value="InterPro"/>
</dbReference>
<dbReference type="GO" id="GO:0000049">
    <property type="term" value="F:tRNA binding"/>
    <property type="evidence" value="ECO:0007669"/>
    <property type="project" value="UniProtKB-UniRule"/>
</dbReference>
<dbReference type="GO" id="GO:0006412">
    <property type="term" value="P:translation"/>
    <property type="evidence" value="ECO:0007669"/>
    <property type="project" value="UniProtKB-UniRule"/>
</dbReference>
<dbReference type="CDD" id="cd14869">
    <property type="entry name" value="uS7_Bacteria"/>
    <property type="match status" value="1"/>
</dbReference>
<dbReference type="FunFam" id="1.10.455.10:FF:000001">
    <property type="entry name" value="30S ribosomal protein S7"/>
    <property type="match status" value="1"/>
</dbReference>
<dbReference type="Gene3D" id="1.10.455.10">
    <property type="entry name" value="Ribosomal protein S7 domain"/>
    <property type="match status" value="1"/>
</dbReference>
<dbReference type="HAMAP" id="MF_00480_B">
    <property type="entry name" value="Ribosomal_uS7_B"/>
    <property type="match status" value="1"/>
</dbReference>
<dbReference type="InterPro" id="IPR000235">
    <property type="entry name" value="Ribosomal_uS7"/>
</dbReference>
<dbReference type="InterPro" id="IPR005717">
    <property type="entry name" value="Ribosomal_uS7_bac/org-type"/>
</dbReference>
<dbReference type="InterPro" id="IPR020606">
    <property type="entry name" value="Ribosomal_uS7_CS"/>
</dbReference>
<dbReference type="InterPro" id="IPR023798">
    <property type="entry name" value="Ribosomal_uS7_dom"/>
</dbReference>
<dbReference type="InterPro" id="IPR036823">
    <property type="entry name" value="Ribosomal_uS7_dom_sf"/>
</dbReference>
<dbReference type="NCBIfam" id="TIGR01029">
    <property type="entry name" value="rpsG_bact"/>
    <property type="match status" value="1"/>
</dbReference>
<dbReference type="PANTHER" id="PTHR11205">
    <property type="entry name" value="RIBOSOMAL PROTEIN S7"/>
    <property type="match status" value="1"/>
</dbReference>
<dbReference type="Pfam" id="PF00177">
    <property type="entry name" value="Ribosomal_S7"/>
    <property type="match status" value="1"/>
</dbReference>
<dbReference type="PIRSF" id="PIRSF002122">
    <property type="entry name" value="RPS7p_RPS7a_RPS5e_RPS7o"/>
    <property type="match status" value="1"/>
</dbReference>
<dbReference type="SUPFAM" id="SSF47973">
    <property type="entry name" value="Ribosomal protein S7"/>
    <property type="match status" value="1"/>
</dbReference>
<dbReference type="PROSITE" id="PS00052">
    <property type="entry name" value="RIBOSOMAL_S7"/>
    <property type="match status" value="1"/>
</dbReference>
<name>RS7_MYCM1</name>
<comment type="function">
    <text evidence="1">One of the primary rRNA binding proteins, it binds directly to 16S rRNA where it nucleates assembly of the head domain of the 30S subunit. Is located at the subunit interface close to the decoding center, probably blocks exit of the E-site tRNA.</text>
</comment>
<comment type="subunit">
    <text evidence="1">Part of the 30S ribosomal subunit. Contacts proteins S9 and S11.</text>
</comment>
<comment type="similarity">
    <text evidence="1">Belongs to the universal ribosomal protein uS7 family.</text>
</comment>
<organism>
    <name type="scientific">Mycoplasma mobile (strain ATCC 43663 / 163K / NCTC 11711)</name>
    <name type="common">Mesomycoplasma mobile</name>
    <dbReference type="NCBI Taxonomy" id="267748"/>
    <lineage>
        <taxon>Bacteria</taxon>
        <taxon>Bacillati</taxon>
        <taxon>Mycoplasmatota</taxon>
        <taxon>Mycoplasmoidales</taxon>
        <taxon>Metamycoplasmataceae</taxon>
        <taxon>Mesomycoplasma</taxon>
    </lineage>
</organism>
<evidence type="ECO:0000255" key="1">
    <source>
        <dbReference type="HAMAP-Rule" id="MF_00480"/>
    </source>
</evidence>
<evidence type="ECO:0000305" key="2"/>
<proteinExistence type="inferred from homology"/>
<keyword id="KW-1185">Reference proteome</keyword>
<keyword id="KW-0687">Ribonucleoprotein</keyword>
<keyword id="KW-0689">Ribosomal protein</keyword>
<keyword id="KW-0694">RNA-binding</keyword>
<keyword id="KW-0699">rRNA-binding</keyword>
<keyword id="KW-0820">tRNA-binding</keyword>